<comment type="function">
    <text evidence="1">Catalyzes the thiamine diphosphate-dependent decarboxylation of 2-oxoglutarate and the subsequent addition of the resulting succinic semialdehyde-thiamine pyrophosphate anion to isochorismate to yield 2-succinyl-5-enolpyruvyl-6-hydroxy-3-cyclohexene-1-carboxylate (SEPHCHC).</text>
</comment>
<comment type="catalytic activity">
    <reaction evidence="1">
        <text>isochorismate + 2-oxoglutarate + H(+) = 5-enolpyruvoyl-6-hydroxy-2-succinyl-cyclohex-3-ene-1-carboxylate + CO2</text>
        <dbReference type="Rhea" id="RHEA:25593"/>
        <dbReference type="ChEBI" id="CHEBI:15378"/>
        <dbReference type="ChEBI" id="CHEBI:16526"/>
        <dbReference type="ChEBI" id="CHEBI:16810"/>
        <dbReference type="ChEBI" id="CHEBI:29780"/>
        <dbReference type="ChEBI" id="CHEBI:58818"/>
        <dbReference type="EC" id="2.2.1.9"/>
    </reaction>
</comment>
<comment type="cofactor">
    <cofactor evidence="1">
        <name>Mg(2+)</name>
        <dbReference type="ChEBI" id="CHEBI:18420"/>
    </cofactor>
    <cofactor evidence="1">
        <name>Mn(2+)</name>
        <dbReference type="ChEBI" id="CHEBI:29035"/>
    </cofactor>
</comment>
<comment type="cofactor">
    <cofactor evidence="1">
        <name>thiamine diphosphate</name>
        <dbReference type="ChEBI" id="CHEBI:58937"/>
    </cofactor>
    <text evidence="1">Binds 1 thiamine pyrophosphate per subunit.</text>
</comment>
<comment type="pathway">
    <text evidence="1">Quinol/quinone metabolism; 1,4-dihydroxy-2-naphthoate biosynthesis; 1,4-dihydroxy-2-naphthoate from chorismate: step 2/7.</text>
</comment>
<comment type="pathway">
    <text evidence="1">Cofactor biosynthesis; phylloquinone biosynthesis.</text>
</comment>
<comment type="subunit">
    <text evidence="1">Homodimer.</text>
</comment>
<comment type="similarity">
    <text evidence="1">Belongs to the TPP enzyme family. MenD subfamily.</text>
</comment>
<feature type="chain" id="PRO_0000341876" description="2-succinyl-5-enolpyruvyl-6-hydroxy-3-cyclohexene-1-carboxylate synthase">
    <location>
        <begin position="1"/>
        <end position="578"/>
    </location>
</feature>
<feature type="region of interest" description="Disordered" evidence="2">
    <location>
        <begin position="186"/>
        <end position="208"/>
    </location>
</feature>
<accession>A5GKI2</accession>
<dbReference type="EC" id="2.2.1.9" evidence="1"/>
<dbReference type="EMBL" id="CT971583">
    <property type="protein sequence ID" value="CAK23447.1"/>
    <property type="molecule type" value="Genomic_DNA"/>
</dbReference>
<dbReference type="SMR" id="A5GKI2"/>
<dbReference type="STRING" id="32051.SynWH7803_1021"/>
<dbReference type="KEGG" id="syx:SynWH7803_1021"/>
<dbReference type="eggNOG" id="COG1165">
    <property type="taxonomic scope" value="Bacteria"/>
</dbReference>
<dbReference type="HOGENOM" id="CLU_006051_4_0_3"/>
<dbReference type="OrthoDB" id="9791859at2"/>
<dbReference type="UniPathway" id="UPA00995"/>
<dbReference type="UniPathway" id="UPA01057">
    <property type="reaction ID" value="UER00164"/>
</dbReference>
<dbReference type="Proteomes" id="UP000001566">
    <property type="component" value="Chromosome"/>
</dbReference>
<dbReference type="GO" id="GO:0070204">
    <property type="term" value="F:2-succinyl-5-enolpyruvyl-6-hydroxy-3-cyclohexene-1-carboxylic-acid synthase activity"/>
    <property type="evidence" value="ECO:0007669"/>
    <property type="project" value="UniProtKB-UniRule"/>
</dbReference>
<dbReference type="GO" id="GO:0000287">
    <property type="term" value="F:magnesium ion binding"/>
    <property type="evidence" value="ECO:0007669"/>
    <property type="project" value="UniProtKB-UniRule"/>
</dbReference>
<dbReference type="GO" id="GO:0030145">
    <property type="term" value="F:manganese ion binding"/>
    <property type="evidence" value="ECO:0007669"/>
    <property type="project" value="UniProtKB-UniRule"/>
</dbReference>
<dbReference type="GO" id="GO:0030976">
    <property type="term" value="F:thiamine pyrophosphate binding"/>
    <property type="evidence" value="ECO:0007669"/>
    <property type="project" value="UniProtKB-UniRule"/>
</dbReference>
<dbReference type="GO" id="GO:0009234">
    <property type="term" value="P:menaquinone biosynthetic process"/>
    <property type="evidence" value="ECO:0007669"/>
    <property type="project" value="InterPro"/>
</dbReference>
<dbReference type="GO" id="GO:0042372">
    <property type="term" value="P:phylloquinone biosynthetic process"/>
    <property type="evidence" value="ECO:0007669"/>
    <property type="project" value="UniProtKB-UniRule"/>
</dbReference>
<dbReference type="CDD" id="cd07037">
    <property type="entry name" value="TPP_PYR_MenD"/>
    <property type="match status" value="1"/>
</dbReference>
<dbReference type="CDD" id="cd02009">
    <property type="entry name" value="TPP_SHCHC_synthase"/>
    <property type="match status" value="1"/>
</dbReference>
<dbReference type="Gene3D" id="3.40.50.970">
    <property type="match status" value="2"/>
</dbReference>
<dbReference type="Gene3D" id="3.40.50.1220">
    <property type="entry name" value="TPP-binding domain"/>
    <property type="match status" value="1"/>
</dbReference>
<dbReference type="HAMAP" id="MF_01659">
    <property type="entry name" value="MenD"/>
    <property type="match status" value="1"/>
</dbReference>
<dbReference type="InterPro" id="IPR004433">
    <property type="entry name" value="MenaQ_synth_MenD"/>
</dbReference>
<dbReference type="InterPro" id="IPR029061">
    <property type="entry name" value="THDP-binding"/>
</dbReference>
<dbReference type="InterPro" id="IPR012001">
    <property type="entry name" value="Thiamin_PyroP_enz_TPP-bd_dom"/>
</dbReference>
<dbReference type="InterPro" id="IPR011766">
    <property type="entry name" value="TPP_enzyme_TPP-bd"/>
</dbReference>
<dbReference type="NCBIfam" id="TIGR00173">
    <property type="entry name" value="menD"/>
    <property type="match status" value="1"/>
</dbReference>
<dbReference type="PANTHER" id="PTHR42916">
    <property type="entry name" value="2-SUCCINYL-5-ENOLPYRUVYL-6-HYDROXY-3-CYCLOHEXENE-1-CARBOXYLATE SYNTHASE"/>
    <property type="match status" value="1"/>
</dbReference>
<dbReference type="PANTHER" id="PTHR42916:SF1">
    <property type="entry name" value="PROTEIN PHYLLO, CHLOROPLASTIC"/>
    <property type="match status" value="1"/>
</dbReference>
<dbReference type="Pfam" id="PF02775">
    <property type="entry name" value="TPP_enzyme_C"/>
    <property type="match status" value="1"/>
</dbReference>
<dbReference type="Pfam" id="PF02776">
    <property type="entry name" value="TPP_enzyme_N"/>
    <property type="match status" value="1"/>
</dbReference>
<dbReference type="PIRSF" id="PIRSF004983">
    <property type="entry name" value="MenD"/>
    <property type="match status" value="1"/>
</dbReference>
<dbReference type="SUPFAM" id="SSF52518">
    <property type="entry name" value="Thiamin diphosphate-binding fold (THDP-binding)"/>
    <property type="match status" value="2"/>
</dbReference>
<reference key="1">
    <citation type="submission" date="2006-05" db="EMBL/GenBank/DDBJ databases">
        <authorList>
            <consortium name="Genoscope"/>
        </authorList>
    </citation>
    <scope>NUCLEOTIDE SEQUENCE [LARGE SCALE GENOMIC DNA]</scope>
    <source>
        <strain>WH7803</strain>
    </source>
</reference>
<evidence type="ECO:0000255" key="1">
    <source>
        <dbReference type="HAMAP-Rule" id="MF_01659"/>
    </source>
</evidence>
<evidence type="ECO:0000256" key="2">
    <source>
        <dbReference type="SAM" id="MobiDB-lite"/>
    </source>
</evidence>
<sequence>MSLLAHLQHQGLRQIVLCPGSRSAPLALAAGGLARQGELTLVTAIDERSAAFHALGLAQASGRATAVITTSGTAVANLLPAAVEADRSCIPLLLLTADRPTRLKDCGANQTVNQEQFLAPVCRAFLSSPGEGLHHENDVQLQSLASSLWERALGSAGPVHLNLPFEEPLHPSEAEQQAFWSAWQPLPAAGGEHHPAEPRSTPWDGPVPDWSRPGVVVAGPWRGLEADRPAYQRALQELALTTGWPVLLDPLAAAPQDLPGVIRHWDLMLPAGLPTPERSLQVLRLGPLPASRRLEAWLRALGPGQWLISEGDCRSLDPLGLASQCSLGLASWWDCVSPNPLSLAPGPSSLLTAWRDLEAAVAGELARQLPQAGPVSEPALMHVLPQLLPPALPVMLAASSPVRDWQAFAAADAGQRRCFSFRGASGIDGTLSLAVGLSRELGPLVLLTGDLALLHDSNGWLLASASAPPLLVLLIDNGGGGIFGQLPIPTAPAAAFDHLFAMPQAVDPLALARAHAVPTRQLASLEDLPQALEWGLDQRRAVLLRVCTNRGADAALRQMLRREVEQALCVVQGSTKEG</sequence>
<protein>
    <recommendedName>
        <fullName evidence="1">2-succinyl-5-enolpyruvyl-6-hydroxy-3-cyclohexene-1-carboxylate synthase</fullName>
        <shortName evidence="1">SEPHCHC synthase</shortName>
        <ecNumber evidence="1">2.2.1.9</ecNumber>
    </recommendedName>
</protein>
<proteinExistence type="inferred from homology"/>
<name>MEND_SYNPW</name>
<organism>
    <name type="scientific">Synechococcus sp. (strain WH7803)</name>
    <dbReference type="NCBI Taxonomy" id="32051"/>
    <lineage>
        <taxon>Bacteria</taxon>
        <taxon>Bacillati</taxon>
        <taxon>Cyanobacteriota</taxon>
        <taxon>Cyanophyceae</taxon>
        <taxon>Synechococcales</taxon>
        <taxon>Synechococcaceae</taxon>
        <taxon>Synechococcus</taxon>
    </lineage>
</organism>
<gene>
    <name evidence="1" type="primary">menD</name>
    <name type="ordered locus">SynWH7803_1021</name>
</gene>
<keyword id="KW-0460">Magnesium</keyword>
<keyword id="KW-0464">Manganese</keyword>
<keyword id="KW-0479">Metal-binding</keyword>
<keyword id="KW-1185">Reference proteome</keyword>
<keyword id="KW-0786">Thiamine pyrophosphate</keyword>
<keyword id="KW-0808">Transferase</keyword>